<gene>
    <name evidence="1" type="primary">groES</name>
    <name evidence="1" type="synonym">groS</name>
    <name type="ordered locus">BLA_0343</name>
</gene>
<keyword id="KW-0143">Chaperone</keyword>
<keyword id="KW-0963">Cytoplasm</keyword>
<keyword id="KW-1185">Reference proteome</keyword>
<sequence>MSFPLTPLEDKIIVKQAEAETQTASGLIIPDNAKEKPQQGEVLAVGPGRRDDEGKRVPMDVKVGDKVLYSKYGGTEVHFKGEEYLIVSARDLLAVVND</sequence>
<name>CH10_BIFA0</name>
<feature type="chain" id="PRO_1000146888" description="Co-chaperonin GroES">
    <location>
        <begin position="1"/>
        <end position="98"/>
    </location>
</feature>
<feature type="region of interest" description="Disordered" evidence="2">
    <location>
        <begin position="32"/>
        <end position="56"/>
    </location>
</feature>
<evidence type="ECO:0000255" key="1">
    <source>
        <dbReference type="HAMAP-Rule" id="MF_00580"/>
    </source>
</evidence>
<evidence type="ECO:0000256" key="2">
    <source>
        <dbReference type="SAM" id="MobiDB-lite"/>
    </source>
</evidence>
<dbReference type="EMBL" id="CP001213">
    <property type="protein sequence ID" value="ACL28645.1"/>
    <property type="molecule type" value="Genomic_DNA"/>
</dbReference>
<dbReference type="RefSeq" id="WP_004268536.1">
    <property type="nucleotide sequence ID" value="NC_011835.1"/>
</dbReference>
<dbReference type="SMR" id="B8DVZ4"/>
<dbReference type="STRING" id="442563.BLA_0343"/>
<dbReference type="GeneID" id="29696658"/>
<dbReference type="KEGG" id="bla:BLA_0343"/>
<dbReference type="HOGENOM" id="CLU_132825_2_0_11"/>
<dbReference type="Proteomes" id="UP000002456">
    <property type="component" value="Chromosome"/>
</dbReference>
<dbReference type="GO" id="GO:0005737">
    <property type="term" value="C:cytoplasm"/>
    <property type="evidence" value="ECO:0007669"/>
    <property type="project" value="UniProtKB-SubCell"/>
</dbReference>
<dbReference type="GO" id="GO:0005524">
    <property type="term" value="F:ATP binding"/>
    <property type="evidence" value="ECO:0007669"/>
    <property type="project" value="InterPro"/>
</dbReference>
<dbReference type="GO" id="GO:0046872">
    <property type="term" value="F:metal ion binding"/>
    <property type="evidence" value="ECO:0007669"/>
    <property type="project" value="TreeGrafter"/>
</dbReference>
<dbReference type="GO" id="GO:0044183">
    <property type="term" value="F:protein folding chaperone"/>
    <property type="evidence" value="ECO:0007669"/>
    <property type="project" value="InterPro"/>
</dbReference>
<dbReference type="GO" id="GO:0051087">
    <property type="term" value="F:protein-folding chaperone binding"/>
    <property type="evidence" value="ECO:0007669"/>
    <property type="project" value="TreeGrafter"/>
</dbReference>
<dbReference type="GO" id="GO:0051082">
    <property type="term" value="F:unfolded protein binding"/>
    <property type="evidence" value="ECO:0007669"/>
    <property type="project" value="TreeGrafter"/>
</dbReference>
<dbReference type="GO" id="GO:0051085">
    <property type="term" value="P:chaperone cofactor-dependent protein refolding"/>
    <property type="evidence" value="ECO:0007669"/>
    <property type="project" value="TreeGrafter"/>
</dbReference>
<dbReference type="CDD" id="cd00320">
    <property type="entry name" value="cpn10"/>
    <property type="match status" value="1"/>
</dbReference>
<dbReference type="FunFam" id="2.30.33.40:FF:000001">
    <property type="entry name" value="10 kDa chaperonin"/>
    <property type="match status" value="1"/>
</dbReference>
<dbReference type="Gene3D" id="2.30.33.40">
    <property type="entry name" value="GroES chaperonin"/>
    <property type="match status" value="1"/>
</dbReference>
<dbReference type="HAMAP" id="MF_00580">
    <property type="entry name" value="CH10"/>
    <property type="match status" value="1"/>
</dbReference>
<dbReference type="InterPro" id="IPR020818">
    <property type="entry name" value="Chaperonin_GroES"/>
</dbReference>
<dbReference type="InterPro" id="IPR037124">
    <property type="entry name" value="Chaperonin_GroES_sf"/>
</dbReference>
<dbReference type="InterPro" id="IPR018369">
    <property type="entry name" value="Chaprnonin_Cpn10_CS"/>
</dbReference>
<dbReference type="InterPro" id="IPR011032">
    <property type="entry name" value="GroES-like_sf"/>
</dbReference>
<dbReference type="NCBIfam" id="NF001527">
    <property type="entry name" value="PRK00364.1-2"/>
    <property type="match status" value="1"/>
</dbReference>
<dbReference type="NCBIfam" id="NF001530">
    <property type="entry name" value="PRK00364.1-6"/>
    <property type="match status" value="1"/>
</dbReference>
<dbReference type="NCBIfam" id="NF001531">
    <property type="entry name" value="PRK00364.2-2"/>
    <property type="match status" value="1"/>
</dbReference>
<dbReference type="NCBIfam" id="NF001533">
    <property type="entry name" value="PRK00364.2-4"/>
    <property type="match status" value="1"/>
</dbReference>
<dbReference type="NCBIfam" id="NF001534">
    <property type="entry name" value="PRK00364.2-5"/>
    <property type="match status" value="1"/>
</dbReference>
<dbReference type="PANTHER" id="PTHR10772">
    <property type="entry name" value="10 KDA HEAT SHOCK PROTEIN"/>
    <property type="match status" value="1"/>
</dbReference>
<dbReference type="PANTHER" id="PTHR10772:SF58">
    <property type="entry name" value="CO-CHAPERONIN GROES"/>
    <property type="match status" value="1"/>
</dbReference>
<dbReference type="Pfam" id="PF00166">
    <property type="entry name" value="Cpn10"/>
    <property type="match status" value="1"/>
</dbReference>
<dbReference type="PRINTS" id="PR00297">
    <property type="entry name" value="CHAPERONIN10"/>
</dbReference>
<dbReference type="SMART" id="SM00883">
    <property type="entry name" value="Cpn10"/>
    <property type="match status" value="1"/>
</dbReference>
<dbReference type="SUPFAM" id="SSF50129">
    <property type="entry name" value="GroES-like"/>
    <property type="match status" value="1"/>
</dbReference>
<dbReference type="PROSITE" id="PS00681">
    <property type="entry name" value="CHAPERONINS_CPN10"/>
    <property type="match status" value="1"/>
</dbReference>
<comment type="function">
    <text evidence="1">Together with the chaperonin GroEL, plays an essential role in assisting protein folding. The GroEL-GroES system forms a nano-cage that allows encapsulation of the non-native substrate proteins and provides a physical environment optimized to promote and accelerate protein folding. GroES binds to the apical surface of the GroEL ring, thereby capping the opening of the GroEL channel.</text>
</comment>
<comment type="subunit">
    <text evidence="1">Heptamer of 7 subunits arranged in a ring. Interacts with the chaperonin GroEL.</text>
</comment>
<comment type="subcellular location">
    <subcellularLocation>
        <location evidence="1">Cytoplasm</location>
    </subcellularLocation>
</comment>
<comment type="similarity">
    <text evidence="1">Belongs to the GroES chaperonin family.</text>
</comment>
<reference key="1">
    <citation type="journal article" date="2009" name="J. Bacteriol.">
        <title>Genome sequence of the probiotic bacterium Bifidobacterium animalis subsp. lactis AD011.</title>
        <authorList>
            <person name="Kim J.F."/>
            <person name="Jeong H."/>
            <person name="Yu D.S."/>
            <person name="Choi S.-H."/>
            <person name="Hur C.-G."/>
            <person name="Park M.-S."/>
            <person name="Yoon S.H."/>
            <person name="Kim D.-W."/>
            <person name="Ji G.E."/>
            <person name="Park H.-S."/>
            <person name="Oh T.K."/>
        </authorList>
    </citation>
    <scope>NUCLEOTIDE SEQUENCE [LARGE SCALE GENOMIC DNA]</scope>
    <source>
        <strain>AD011</strain>
    </source>
</reference>
<proteinExistence type="inferred from homology"/>
<protein>
    <recommendedName>
        <fullName evidence="1">Co-chaperonin GroES</fullName>
    </recommendedName>
    <alternativeName>
        <fullName evidence="1">10 kDa chaperonin</fullName>
    </alternativeName>
    <alternativeName>
        <fullName evidence="1">Chaperonin-10</fullName>
        <shortName evidence="1">Cpn10</shortName>
    </alternativeName>
</protein>
<organism>
    <name type="scientific">Bifidobacterium animalis subsp. lactis (strain AD011)</name>
    <dbReference type="NCBI Taxonomy" id="442563"/>
    <lineage>
        <taxon>Bacteria</taxon>
        <taxon>Bacillati</taxon>
        <taxon>Actinomycetota</taxon>
        <taxon>Actinomycetes</taxon>
        <taxon>Bifidobacteriales</taxon>
        <taxon>Bifidobacteriaceae</taxon>
        <taxon>Bifidobacterium</taxon>
    </lineage>
</organism>
<accession>B8DVZ4</accession>